<evidence type="ECO:0000255" key="1">
    <source>
        <dbReference type="HAMAP-Rule" id="MF_04051"/>
    </source>
</evidence>
<evidence type="ECO:0000305" key="2"/>
<keyword id="KW-0007">Acetylation</keyword>
<keyword id="KW-0167">Capsid protein</keyword>
<keyword id="KW-1176">Cytoplasmic inwards viral transport</keyword>
<keyword id="KW-1048">Host nucleus</keyword>
<keyword id="KW-0945">Host-virus interaction</keyword>
<keyword id="KW-0426">Late protein</keyword>
<keyword id="KW-1177">Microtubular inwards viral transport</keyword>
<keyword id="KW-0597">Phosphoprotein</keyword>
<keyword id="KW-1185">Reference proteome</keyword>
<keyword id="KW-1148">T=25 icosahedral capsid protein</keyword>
<keyword id="KW-0946">Virion</keyword>
<keyword id="KW-1160">Virus entry into host cell</keyword>
<organism>
    <name type="scientific">Human adenovirus A serotype 12</name>
    <name type="common">HAdV-12</name>
    <name type="synonym">Human adenovirus 12</name>
    <dbReference type="NCBI Taxonomy" id="28282"/>
    <lineage>
        <taxon>Viruses</taxon>
        <taxon>Varidnaviria</taxon>
        <taxon>Bamfordvirae</taxon>
        <taxon>Preplasmiviricota</taxon>
        <taxon>Tectiliviricetes</taxon>
        <taxon>Rowavirales</taxon>
        <taxon>Adenoviridae</taxon>
        <taxon>Mastadenovirus</taxon>
        <taxon>Human mastadenovirus A</taxon>
    </lineage>
</organism>
<comment type="function">
    <text evidence="1">Major capsid protein that self-associates to form 240 hexon trimers, each in the shape of a hexagon, building most of the pseudo T=25 capsid. Assembled into trimeric units with the help of the chaperone shutoff protein. Transported by pre-protein VI to the nucleus where it associates with other structural proteins to form an empty capsid. Might be involved, through its interaction with host dyneins, in the intracellular microtubule-dependent transport of incoming viral capsid to the nucleus.</text>
</comment>
<comment type="subunit">
    <text evidence="1">Homotrimer. Interacts with the capsid vertex protein; this interaction binds the peripentonal hexons to the neighboring penton base. Interacts with the hexon-linking protein; this interaction tethers the hexons surrounding the penton to those situated in the central plate of the facet. Interacts with the hexon-interlacing protein; this interaction lashes the hexons together. Interacts with host dyneins DYNC1LI1 and DYNC1I2; this interaction might be involved in intracellular microtubule-dependent transport of incoming viral capsid. Interacts with the shutoff protein; this interaction allows folding and formation of hexons trimers. Interacts with pre-protein VI; this interaction probably allows nuclear import of hexon trimers and possibly pre-capsid assembly.</text>
</comment>
<comment type="subcellular location">
    <subcellularLocation>
        <location evidence="1">Virion</location>
    </subcellularLocation>
    <subcellularLocation>
        <location evidence="1">Host nucleus</location>
    </subcellularLocation>
    <text evidence="1">Forms the capsid icosahedric shell. Present in 720 copies per virion, assembled in 240 trimers.</text>
</comment>
<comment type="induction">
    <text evidence="1">Expressed in the late phase of the viral replicative cycle.</text>
</comment>
<comment type="miscellaneous">
    <text evidence="1">All late proteins expressed from the major late promoter are produced by alternative splicing and alternative polyadenylation of the same gene giving rise to non-overlapping ORFs. A leader sequence is present in the N-terminus of all these mRNAs and is recognized by the viral shutoff protein to provide expression although conventional translation via ribosome scanning from the cap has been shut off in the host cell.</text>
</comment>
<comment type="similarity">
    <text evidence="1 2">Belongs to the adenoviridae hexon protein family.</text>
</comment>
<organismHost>
    <name type="scientific">Homo sapiens</name>
    <name type="common">Human</name>
    <dbReference type="NCBI Taxonomy" id="9606"/>
</organismHost>
<dbReference type="EMBL" id="X73487">
    <property type="protein sequence ID" value="CAA51891.1"/>
    <property type="molecule type" value="Genomic_DNA"/>
</dbReference>
<dbReference type="EMBL" id="X07655">
    <property type="protein sequence ID" value="CAB37192.1"/>
    <property type="molecule type" value="Genomic_DNA"/>
</dbReference>
<dbReference type="PIR" id="S01730">
    <property type="entry name" value="S01730"/>
</dbReference>
<dbReference type="PIR" id="S33942">
    <property type="entry name" value="S33942"/>
</dbReference>
<dbReference type="RefSeq" id="NP_040924.1">
    <property type="nucleotide sequence ID" value="NC_001460.1"/>
</dbReference>
<dbReference type="SMR" id="P19900"/>
<dbReference type="GeneID" id="1460858"/>
<dbReference type="KEGG" id="vg:1460858"/>
<dbReference type="Proteomes" id="UP000004993">
    <property type="component" value="Genome"/>
</dbReference>
<dbReference type="GO" id="GO:0043657">
    <property type="term" value="C:host cell"/>
    <property type="evidence" value="ECO:0007669"/>
    <property type="project" value="GOC"/>
</dbReference>
<dbReference type="GO" id="GO:0042025">
    <property type="term" value="C:host cell nucleus"/>
    <property type="evidence" value="ECO:0007669"/>
    <property type="project" value="UniProtKB-SubCell"/>
</dbReference>
<dbReference type="GO" id="GO:0039623">
    <property type="term" value="C:T=25 icosahedral viral capsid"/>
    <property type="evidence" value="ECO:0007669"/>
    <property type="project" value="UniProtKB-UniRule"/>
</dbReference>
<dbReference type="GO" id="GO:0005198">
    <property type="term" value="F:structural molecule activity"/>
    <property type="evidence" value="ECO:0007669"/>
    <property type="project" value="UniProtKB-UniRule"/>
</dbReference>
<dbReference type="GO" id="GO:0075521">
    <property type="term" value="P:microtubule-dependent intracellular transport of viral material towards nucleus"/>
    <property type="evidence" value="ECO:0007669"/>
    <property type="project" value="UniProtKB-UniRule"/>
</dbReference>
<dbReference type="GO" id="GO:0046718">
    <property type="term" value="P:symbiont entry into host cell"/>
    <property type="evidence" value="ECO:0007669"/>
    <property type="project" value="UniProtKB-UniRule"/>
</dbReference>
<dbReference type="FunFam" id="2.70.9.10:FF:000001">
    <property type="entry name" value="Hexon protein"/>
    <property type="match status" value="1"/>
</dbReference>
<dbReference type="Gene3D" id="2.70.9.10">
    <property type="entry name" value="Adenovirus Type 2 Hexon, domain 4"/>
    <property type="match status" value="2"/>
</dbReference>
<dbReference type="Gene3D" id="3.90.39.10">
    <property type="entry name" value="Hexon Major Viral Coat Protein, domain 2"/>
    <property type="match status" value="1"/>
</dbReference>
<dbReference type="Gene3D" id="3.90.249.10">
    <property type="entry name" value="Hexon Major Viral Coat Protein, domain 3"/>
    <property type="match status" value="2"/>
</dbReference>
<dbReference type="HAMAP" id="MF_04051">
    <property type="entry name" value="ADV_CAPSH"/>
    <property type="match status" value="1"/>
</dbReference>
<dbReference type="InterPro" id="IPR016108">
    <property type="entry name" value="Adenovirus_Pll_hexon_C"/>
</dbReference>
<dbReference type="InterPro" id="IPR016107">
    <property type="entry name" value="Adenovirus_Pll_hexon_N"/>
</dbReference>
<dbReference type="InterPro" id="IPR044942">
    <property type="entry name" value="Adenovirus_Pll_hexon_sub2"/>
</dbReference>
<dbReference type="InterPro" id="IPR016110">
    <property type="entry name" value="Adenovirus_Pll_hexon_sub3"/>
</dbReference>
<dbReference type="InterPro" id="IPR037542">
    <property type="entry name" value="ADV_hexon"/>
</dbReference>
<dbReference type="InterPro" id="IPR016112">
    <property type="entry name" value="VP_dsDNA_II"/>
</dbReference>
<dbReference type="Pfam" id="PF01065">
    <property type="entry name" value="Adeno_hexon"/>
    <property type="match status" value="1"/>
</dbReference>
<dbReference type="Pfam" id="PF03678">
    <property type="entry name" value="Adeno_hexon_C"/>
    <property type="match status" value="1"/>
</dbReference>
<dbReference type="SUPFAM" id="SSF49749">
    <property type="entry name" value="Group II dsDNA viruses VP"/>
    <property type="match status" value="2"/>
</dbReference>
<protein>
    <recommendedName>
        <fullName evidence="1">Hexon protein</fullName>
        <shortName evidence="1">CP-H</shortName>
    </recommendedName>
    <alternativeName>
        <fullName evidence="1">Protein II</fullName>
    </alternativeName>
</protein>
<feature type="initiator methionine" description="Removed; by host" evidence="1">
    <location>
        <position position="1"/>
    </location>
</feature>
<feature type="chain" id="PRO_0000221821" description="Hexon protein" evidence="1">
    <location>
        <begin position="2"/>
        <end position="919"/>
    </location>
</feature>
<feature type="site" description="Involved in interaction with pre-protein VI" evidence="1">
    <location>
        <position position="744"/>
    </location>
</feature>
<feature type="modified residue" description="N-acetylalanine; by host" evidence="1">
    <location>
        <position position="2"/>
    </location>
</feature>
<feature type="modified residue" description="Phosphotyrosine; by host" evidence="1">
    <location>
        <position position="907"/>
    </location>
</feature>
<reference key="1">
    <citation type="journal article" date="1994" name="J. Virol.">
        <title>Nucleotide sequence of human adenovirus type 12 DNA: comparative functional analysis.</title>
        <authorList>
            <person name="Sprengel J."/>
            <person name="Schmitz B."/>
            <person name="Heuss-Neitzel D."/>
            <person name="Zock C."/>
            <person name="Doerfler W."/>
        </authorList>
    </citation>
    <scope>NUCLEOTIDE SEQUENCE [LARGE SCALE GENOMIC DNA]</scope>
</reference>
<reference key="2">
    <citation type="journal article" date="1988" name="Nucleic Acids Res.">
        <title>The primary structure of human adenovirus type 12 protease.</title>
        <authorList>
            <person name="Weber J.M."/>
            <person name="Houde A."/>
        </authorList>
    </citation>
    <scope>NUCLEOTIDE SEQUENCE [GENOMIC DNA] OF 888-919</scope>
    <source>
        <strain>Pereira 1131</strain>
    </source>
</reference>
<gene>
    <name evidence="1" type="primary">L3</name>
</gene>
<accession>P19900</accession>
<name>CAPSH_ADE12</name>
<sequence>MATPSMMPQWSYMHIAGQDASEYLSPGLVQFARATDTYFTLGNKFRNPTVAPTHDVTTDRSQRLTLRFVPVDREDTTYSYKARFTLAVGDNRVLDMASSYFDIRGVLDRGPSFKPYSGTAYNSLAPKGAPNASQWSDNAKLNTFAQAPYLSDTITAADGIKVGTDTAQAGAAVYANKTYQPEPQVGPSEWNTSIENVKAGGRALKQTTAMQPCYGSYARPTNEHGGQSKDDNIELKFFDSANNAANTAQVVFYTEDVNLEMPDTHLVFKPTVTNGTIASESLLGQQAAPNRANYIAFRDNFIGLMYYNSTGNMGVLAGQASQLNAVVDLQDRNTELSYQLMLDALGDRTRYFSLWNSAVDSYDPDVRVIENHGVEDELPNYCFPLSAVGEIKNYKGIKPDNGGGGGWTADNTVSEANHIGIGNIAAMEINLQANLWRSFLYSNVGLYLPDDLKYTPGNIKLPDNKNTYEYMNGRVTAPGLVDTYVNIGARWSPDVMDNVNPFNHHRNAGLRYRSMLLGNGRFVPFHIQVPQKFFAIRNLLLLPGSYTYEWNFRKDVNMILQSTLGNDLRVDGASVRFDNIALYANFFPMAHNTASTLEAMLRNDTNDQSFNDYLCAANMLYPIPANATSVPISIPSRNWAAFRGWSFTRLKTKETPSLGSGFDPYFVYSGTIPYLDGTFYLNHTFKKVSIMFDSSVSWPGNDRLLTPNEFEIKRSVDGEGYNVAQCNMTKDWFLIQMLSHYNIGYQGFYIPESYKDRMYSFFRNFQPMSRQVVDTTEYKNYKKVTVEFQHNNSGFVGYLGPTMREGQAYPANYPYPLIGQTAVESITQKKFLCDRVMWRIPFSSNFMSMGALTDLGQNMLYANSAHALDMTFEVDPMDEPTLLYVLFEVFDVVRIHQPHRGVIEAVYLRTPFSAGNATT</sequence>
<proteinExistence type="inferred from homology"/>